<name>UVRC_STACT</name>
<sequence length="595" mass="68806">MEAYKEKIKEKLSVVPFEPGCYLMKDRNNQVIYVGKAKRLRNRLRSYFTGAHDAKTTRLVGEIRNFEFIVTDSETESLLLELNLIKQYQPRYNILLKDDKSYPFIKITKEKYPRLLVTRTVKKGSGKYFGPYPNAYAAVETKKLLDRIYPFRKCDKMPNKLCLYYHIGQCLGPCVYDVDQKEYDDMTQEVSDFLNGEDKTIIKNLESRMQAASENLEFEQAKEYRDLIQNIHNLTKKQNIMSADNTARDVFGYYISKGWMCIQVFFVRNGNMIQRDTTMIPLQQTPEEEFYTFIGQFYRLNQHLLPKEVHVPKNLDKKMIESVVDTKILQPVRGQKKDLVNMANHNAEVSLQNKFELIARDESRTVKAIEELGEQMGIQTPIRIEAFDNSNIQGVDAVSAMVTFVDGKPDKKGYRKYKIKTVEGPDDYKSMQEVIRRRYTRVLNDGLPLPDLIIVDGGKGQMSVAIDVLENELGLDIPVAGLRKNDKHRTSELLYGPAAEVVPLKKNSQAFYLLQRIQDEVHRFAITFHRKTRQKHSFTSALDEIEGIGPKRKTTLLRTFGSIKKMREATLEDLKEAGLPEKVAESLQKELNKED</sequence>
<organism>
    <name type="scientific">Staphylococcus carnosus (strain TM300)</name>
    <dbReference type="NCBI Taxonomy" id="396513"/>
    <lineage>
        <taxon>Bacteria</taxon>
        <taxon>Bacillati</taxon>
        <taxon>Bacillota</taxon>
        <taxon>Bacilli</taxon>
        <taxon>Bacillales</taxon>
        <taxon>Staphylococcaceae</taxon>
        <taxon>Staphylococcus</taxon>
    </lineage>
</organism>
<proteinExistence type="inferred from homology"/>
<dbReference type="EMBL" id="AM295250">
    <property type="protein sequence ID" value="CAL27674.1"/>
    <property type="molecule type" value="Genomic_DNA"/>
</dbReference>
<dbReference type="RefSeq" id="WP_015900016.1">
    <property type="nucleotide sequence ID" value="NC_012121.1"/>
</dbReference>
<dbReference type="SMR" id="B9DPT1"/>
<dbReference type="GeneID" id="93795701"/>
<dbReference type="KEGG" id="sca:SCA_0764"/>
<dbReference type="eggNOG" id="COG0322">
    <property type="taxonomic scope" value="Bacteria"/>
</dbReference>
<dbReference type="HOGENOM" id="CLU_014841_3_2_9"/>
<dbReference type="OrthoDB" id="9804933at2"/>
<dbReference type="BioCyc" id="SCAR396513:SCA_RS03870-MONOMER"/>
<dbReference type="Proteomes" id="UP000000444">
    <property type="component" value="Chromosome"/>
</dbReference>
<dbReference type="GO" id="GO:0005737">
    <property type="term" value="C:cytoplasm"/>
    <property type="evidence" value="ECO:0007669"/>
    <property type="project" value="UniProtKB-SubCell"/>
</dbReference>
<dbReference type="GO" id="GO:0009380">
    <property type="term" value="C:excinuclease repair complex"/>
    <property type="evidence" value="ECO:0007669"/>
    <property type="project" value="InterPro"/>
</dbReference>
<dbReference type="GO" id="GO:0003677">
    <property type="term" value="F:DNA binding"/>
    <property type="evidence" value="ECO:0007669"/>
    <property type="project" value="UniProtKB-UniRule"/>
</dbReference>
<dbReference type="GO" id="GO:0009381">
    <property type="term" value="F:excinuclease ABC activity"/>
    <property type="evidence" value="ECO:0007669"/>
    <property type="project" value="UniProtKB-UniRule"/>
</dbReference>
<dbReference type="GO" id="GO:0006289">
    <property type="term" value="P:nucleotide-excision repair"/>
    <property type="evidence" value="ECO:0007669"/>
    <property type="project" value="UniProtKB-UniRule"/>
</dbReference>
<dbReference type="GO" id="GO:0009432">
    <property type="term" value="P:SOS response"/>
    <property type="evidence" value="ECO:0007669"/>
    <property type="project" value="UniProtKB-UniRule"/>
</dbReference>
<dbReference type="CDD" id="cd10434">
    <property type="entry name" value="GIY-YIG_UvrC_Cho"/>
    <property type="match status" value="1"/>
</dbReference>
<dbReference type="FunFam" id="3.30.420.340:FF:000002">
    <property type="entry name" value="UvrABC system protein C"/>
    <property type="match status" value="1"/>
</dbReference>
<dbReference type="FunFam" id="3.40.1440.10:FF:000001">
    <property type="entry name" value="UvrABC system protein C"/>
    <property type="match status" value="1"/>
</dbReference>
<dbReference type="FunFam" id="4.10.860.10:FF:000007">
    <property type="entry name" value="UvrABC system protein C"/>
    <property type="match status" value="1"/>
</dbReference>
<dbReference type="Gene3D" id="1.10.150.20">
    <property type="entry name" value="5' to 3' exonuclease, C-terminal subdomain"/>
    <property type="match status" value="1"/>
</dbReference>
<dbReference type="Gene3D" id="3.40.1440.10">
    <property type="entry name" value="GIY-YIG endonuclease"/>
    <property type="match status" value="1"/>
</dbReference>
<dbReference type="Gene3D" id="4.10.860.10">
    <property type="entry name" value="UVR domain"/>
    <property type="match status" value="1"/>
</dbReference>
<dbReference type="Gene3D" id="3.30.420.340">
    <property type="entry name" value="UvrC, RNAse H endonuclease domain"/>
    <property type="match status" value="1"/>
</dbReference>
<dbReference type="HAMAP" id="MF_00203">
    <property type="entry name" value="UvrC"/>
    <property type="match status" value="1"/>
</dbReference>
<dbReference type="InterPro" id="IPR000305">
    <property type="entry name" value="GIY-YIG_endonuc"/>
</dbReference>
<dbReference type="InterPro" id="IPR035901">
    <property type="entry name" value="GIY-YIG_endonuc_sf"/>
</dbReference>
<dbReference type="InterPro" id="IPR047296">
    <property type="entry name" value="GIY-YIG_UvrC_Cho"/>
</dbReference>
<dbReference type="InterPro" id="IPR010994">
    <property type="entry name" value="RuvA_2-like"/>
</dbReference>
<dbReference type="InterPro" id="IPR001943">
    <property type="entry name" value="UVR_dom"/>
</dbReference>
<dbReference type="InterPro" id="IPR036876">
    <property type="entry name" value="UVR_dom_sf"/>
</dbReference>
<dbReference type="InterPro" id="IPR050066">
    <property type="entry name" value="UvrABC_protein_C"/>
</dbReference>
<dbReference type="InterPro" id="IPR004791">
    <property type="entry name" value="UvrC"/>
</dbReference>
<dbReference type="InterPro" id="IPR001162">
    <property type="entry name" value="UvrC_RNase_H_dom"/>
</dbReference>
<dbReference type="InterPro" id="IPR038476">
    <property type="entry name" value="UvrC_RNase_H_dom_sf"/>
</dbReference>
<dbReference type="NCBIfam" id="TIGR00194">
    <property type="entry name" value="uvrC"/>
    <property type="match status" value="1"/>
</dbReference>
<dbReference type="PANTHER" id="PTHR30562:SF1">
    <property type="entry name" value="UVRABC SYSTEM PROTEIN C"/>
    <property type="match status" value="1"/>
</dbReference>
<dbReference type="PANTHER" id="PTHR30562">
    <property type="entry name" value="UVRC/OXIDOREDUCTASE"/>
    <property type="match status" value="1"/>
</dbReference>
<dbReference type="Pfam" id="PF01541">
    <property type="entry name" value="GIY-YIG"/>
    <property type="match status" value="1"/>
</dbReference>
<dbReference type="Pfam" id="PF14520">
    <property type="entry name" value="HHH_5"/>
    <property type="match status" value="1"/>
</dbReference>
<dbReference type="Pfam" id="PF02151">
    <property type="entry name" value="UVR"/>
    <property type="match status" value="1"/>
</dbReference>
<dbReference type="Pfam" id="PF22920">
    <property type="entry name" value="UvrC_RNaseH"/>
    <property type="match status" value="1"/>
</dbReference>
<dbReference type="Pfam" id="PF08459">
    <property type="entry name" value="UvrC_RNaseH_dom"/>
    <property type="match status" value="1"/>
</dbReference>
<dbReference type="SMART" id="SM00465">
    <property type="entry name" value="GIYc"/>
    <property type="match status" value="1"/>
</dbReference>
<dbReference type="SUPFAM" id="SSF46600">
    <property type="entry name" value="C-terminal UvrC-binding domain of UvrB"/>
    <property type="match status" value="1"/>
</dbReference>
<dbReference type="SUPFAM" id="SSF82771">
    <property type="entry name" value="GIY-YIG endonuclease"/>
    <property type="match status" value="1"/>
</dbReference>
<dbReference type="SUPFAM" id="SSF47781">
    <property type="entry name" value="RuvA domain 2-like"/>
    <property type="match status" value="1"/>
</dbReference>
<dbReference type="PROSITE" id="PS50164">
    <property type="entry name" value="GIY_YIG"/>
    <property type="match status" value="1"/>
</dbReference>
<dbReference type="PROSITE" id="PS50151">
    <property type="entry name" value="UVR"/>
    <property type="match status" value="1"/>
</dbReference>
<dbReference type="PROSITE" id="PS50165">
    <property type="entry name" value="UVRC"/>
    <property type="match status" value="1"/>
</dbReference>
<gene>
    <name evidence="1" type="primary">uvrC</name>
    <name type="ordered locus">Sca_0764</name>
</gene>
<protein>
    <recommendedName>
        <fullName evidence="1">UvrABC system protein C</fullName>
        <shortName evidence="1">Protein UvrC</shortName>
    </recommendedName>
    <alternativeName>
        <fullName evidence="1">Excinuclease ABC subunit C</fullName>
    </alternativeName>
</protein>
<keyword id="KW-0963">Cytoplasm</keyword>
<keyword id="KW-0227">DNA damage</keyword>
<keyword id="KW-0228">DNA excision</keyword>
<keyword id="KW-0234">DNA repair</keyword>
<keyword id="KW-0267">Excision nuclease</keyword>
<keyword id="KW-1185">Reference proteome</keyword>
<keyword id="KW-0742">SOS response</keyword>
<accession>B9DPT1</accession>
<reference key="1">
    <citation type="journal article" date="2009" name="Appl. Environ. Microbiol.">
        <title>Genome analysis of the meat starter culture bacterium Staphylococcus carnosus TM300.</title>
        <authorList>
            <person name="Rosenstein R."/>
            <person name="Nerz C."/>
            <person name="Biswas L."/>
            <person name="Resch A."/>
            <person name="Raddatz G."/>
            <person name="Schuster S.C."/>
            <person name="Goetz F."/>
        </authorList>
    </citation>
    <scope>NUCLEOTIDE SEQUENCE [LARGE SCALE GENOMIC DNA]</scope>
    <source>
        <strain>TM300</strain>
    </source>
</reference>
<feature type="chain" id="PRO_1000200600" description="UvrABC system protein C">
    <location>
        <begin position="1"/>
        <end position="595"/>
    </location>
</feature>
<feature type="domain" description="GIY-YIG" evidence="1">
    <location>
        <begin position="17"/>
        <end position="94"/>
    </location>
</feature>
<feature type="domain" description="UVR" evidence="1">
    <location>
        <begin position="199"/>
        <end position="234"/>
    </location>
</feature>
<comment type="function">
    <text evidence="1">The UvrABC repair system catalyzes the recognition and processing of DNA lesions. UvrC both incises the 5' and 3' sides of the lesion. The N-terminal half is responsible for the 3' incision and the C-terminal half is responsible for the 5' incision.</text>
</comment>
<comment type="subunit">
    <text evidence="1">Interacts with UvrB in an incision complex.</text>
</comment>
<comment type="subcellular location">
    <subcellularLocation>
        <location evidence="1">Cytoplasm</location>
    </subcellularLocation>
</comment>
<comment type="similarity">
    <text evidence="1">Belongs to the UvrC family.</text>
</comment>
<evidence type="ECO:0000255" key="1">
    <source>
        <dbReference type="HAMAP-Rule" id="MF_00203"/>
    </source>
</evidence>